<sequence length="228" mass="23365">MPAFFVTGTDTEIGKTTIAAGLLHAARSAGLSTAAAKPVASGCEPTAQGLRNGDALVLLGQCSLALAYEQVNPLAFAPAIAPHLAAREAGVELSAARLHEAVREVLALQADFTLVEGAGGWRVPLLGRENLSDLARLLALPVVLVVGVRLGCINHALLSAEAILGDGLALVGWVANVVDPATSRLEENLATLAERLPAPCLGRVPRLEEATPAAVAAHLDLRPLGIGL</sequence>
<feature type="chain" id="PRO_1000119881" description="ATP-dependent dethiobiotin synthetase BioD">
    <location>
        <begin position="1"/>
        <end position="228"/>
    </location>
</feature>
<feature type="active site" evidence="1">
    <location>
        <position position="37"/>
    </location>
</feature>
<feature type="binding site" evidence="1">
    <location>
        <begin position="12"/>
        <end position="17"/>
    </location>
    <ligand>
        <name>ATP</name>
        <dbReference type="ChEBI" id="CHEBI:30616"/>
    </ligand>
</feature>
<feature type="binding site" evidence="1">
    <location>
        <position position="16"/>
    </location>
    <ligand>
        <name>Mg(2+)</name>
        <dbReference type="ChEBI" id="CHEBI:18420"/>
    </ligand>
</feature>
<feature type="binding site" evidence="1">
    <location>
        <position position="41"/>
    </location>
    <ligand>
        <name>substrate</name>
    </ligand>
</feature>
<feature type="binding site" evidence="1">
    <location>
        <position position="54"/>
    </location>
    <ligand>
        <name>ATP</name>
        <dbReference type="ChEBI" id="CHEBI:30616"/>
    </ligand>
</feature>
<feature type="binding site" evidence="1">
    <location>
        <position position="54"/>
    </location>
    <ligand>
        <name>Mg(2+)</name>
        <dbReference type="ChEBI" id="CHEBI:18420"/>
    </ligand>
</feature>
<feature type="binding site" evidence="1">
    <location>
        <begin position="116"/>
        <end position="119"/>
    </location>
    <ligand>
        <name>ATP</name>
        <dbReference type="ChEBI" id="CHEBI:30616"/>
    </ligand>
</feature>
<feature type="binding site" evidence="1">
    <location>
        <position position="116"/>
    </location>
    <ligand>
        <name>Mg(2+)</name>
        <dbReference type="ChEBI" id="CHEBI:18420"/>
    </ligand>
</feature>
<feature type="binding site" evidence="1">
    <location>
        <begin position="205"/>
        <end position="207"/>
    </location>
    <ligand>
        <name>ATP</name>
        <dbReference type="ChEBI" id="CHEBI:30616"/>
    </ligand>
</feature>
<dbReference type="EC" id="6.3.3.3" evidence="1"/>
<dbReference type="EMBL" id="FM209186">
    <property type="protein sequence ID" value="CAW25227.1"/>
    <property type="molecule type" value="Genomic_DNA"/>
</dbReference>
<dbReference type="RefSeq" id="WP_003160873.1">
    <property type="nucleotide sequence ID" value="NC_011770.1"/>
</dbReference>
<dbReference type="SMR" id="B7V489"/>
<dbReference type="KEGG" id="pag:PLES_05001"/>
<dbReference type="HOGENOM" id="CLU_072551_0_0_6"/>
<dbReference type="UniPathway" id="UPA00078">
    <property type="reaction ID" value="UER00161"/>
</dbReference>
<dbReference type="GO" id="GO:0005829">
    <property type="term" value="C:cytosol"/>
    <property type="evidence" value="ECO:0007669"/>
    <property type="project" value="TreeGrafter"/>
</dbReference>
<dbReference type="GO" id="GO:0005524">
    <property type="term" value="F:ATP binding"/>
    <property type="evidence" value="ECO:0007669"/>
    <property type="project" value="UniProtKB-UniRule"/>
</dbReference>
<dbReference type="GO" id="GO:0004141">
    <property type="term" value="F:dethiobiotin synthase activity"/>
    <property type="evidence" value="ECO:0007669"/>
    <property type="project" value="UniProtKB-UniRule"/>
</dbReference>
<dbReference type="GO" id="GO:0000287">
    <property type="term" value="F:magnesium ion binding"/>
    <property type="evidence" value="ECO:0007669"/>
    <property type="project" value="UniProtKB-UniRule"/>
</dbReference>
<dbReference type="GO" id="GO:0009102">
    <property type="term" value="P:biotin biosynthetic process"/>
    <property type="evidence" value="ECO:0007669"/>
    <property type="project" value="UniProtKB-UniRule"/>
</dbReference>
<dbReference type="CDD" id="cd03109">
    <property type="entry name" value="DTBS"/>
    <property type="match status" value="1"/>
</dbReference>
<dbReference type="FunFam" id="3.40.50.300:FF:000292">
    <property type="entry name" value="ATP-dependent dethiobiotin synthetase BioD"/>
    <property type="match status" value="1"/>
</dbReference>
<dbReference type="Gene3D" id="3.40.50.300">
    <property type="entry name" value="P-loop containing nucleotide triphosphate hydrolases"/>
    <property type="match status" value="1"/>
</dbReference>
<dbReference type="HAMAP" id="MF_00336">
    <property type="entry name" value="BioD"/>
    <property type="match status" value="1"/>
</dbReference>
<dbReference type="InterPro" id="IPR004472">
    <property type="entry name" value="DTB_synth_BioD"/>
</dbReference>
<dbReference type="InterPro" id="IPR027417">
    <property type="entry name" value="P-loop_NTPase"/>
</dbReference>
<dbReference type="NCBIfam" id="TIGR00347">
    <property type="entry name" value="bioD"/>
    <property type="match status" value="1"/>
</dbReference>
<dbReference type="PANTHER" id="PTHR43210">
    <property type="entry name" value="DETHIOBIOTIN SYNTHETASE"/>
    <property type="match status" value="1"/>
</dbReference>
<dbReference type="PANTHER" id="PTHR43210:SF5">
    <property type="entry name" value="DETHIOBIOTIN SYNTHETASE"/>
    <property type="match status" value="1"/>
</dbReference>
<dbReference type="Pfam" id="PF13500">
    <property type="entry name" value="AAA_26"/>
    <property type="match status" value="1"/>
</dbReference>
<dbReference type="PIRSF" id="PIRSF006755">
    <property type="entry name" value="DTB_synth"/>
    <property type="match status" value="1"/>
</dbReference>
<dbReference type="SUPFAM" id="SSF52540">
    <property type="entry name" value="P-loop containing nucleoside triphosphate hydrolases"/>
    <property type="match status" value="1"/>
</dbReference>
<gene>
    <name evidence="1" type="primary">bioD</name>
    <name type="ordered locus">PLES_05001</name>
</gene>
<reference key="1">
    <citation type="journal article" date="2009" name="Genome Res.">
        <title>Newly introduced genomic prophage islands are critical determinants of in vivo competitiveness in the Liverpool epidemic strain of Pseudomonas aeruginosa.</title>
        <authorList>
            <person name="Winstanley C."/>
            <person name="Langille M.G.I."/>
            <person name="Fothergill J.L."/>
            <person name="Kukavica-Ibrulj I."/>
            <person name="Paradis-Bleau C."/>
            <person name="Sanschagrin F."/>
            <person name="Thomson N.R."/>
            <person name="Winsor G.L."/>
            <person name="Quail M.A."/>
            <person name="Lennard N."/>
            <person name="Bignell A."/>
            <person name="Clarke L."/>
            <person name="Seeger K."/>
            <person name="Saunders D."/>
            <person name="Harris D."/>
            <person name="Parkhill J."/>
            <person name="Hancock R.E.W."/>
            <person name="Brinkman F.S.L."/>
            <person name="Levesque R.C."/>
        </authorList>
    </citation>
    <scope>NUCLEOTIDE SEQUENCE [LARGE SCALE GENOMIC DNA]</scope>
    <source>
        <strain>LESB58</strain>
    </source>
</reference>
<protein>
    <recommendedName>
        <fullName evidence="1">ATP-dependent dethiobiotin synthetase BioD</fullName>
        <ecNumber evidence="1">6.3.3.3</ecNumber>
    </recommendedName>
    <alternativeName>
        <fullName evidence="1">DTB synthetase</fullName>
        <shortName evidence="1">DTBS</shortName>
    </alternativeName>
    <alternativeName>
        <fullName evidence="1">Dethiobiotin synthase</fullName>
    </alternativeName>
</protein>
<comment type="function">
    <text evidence="1">Catalyzes a mechanistically unusual reaction, the ATP-dependent insertion of CO2 between the N7 and N8 nitrogen atoms of 7,8-diaminopelargonic acid (DAPA, also called 7,8-diammoniononanoate) to form a ureido ring.</text>
</comment>
<comment type="catalytic activity">
    <reaction evidence="1">
        <text>(7R,8S)-7,8-diammoniononanoate + CO2 + ATP = (4R,5S)-dethiobiotin + ADP + phosphate + 3 H(+)</text>
        <dbReference type="Rhea" id="RHEA:15805"/>
        <dbReference type="ChEBI" id="CHEBI:15378"/>
        <dbReference type="ChEBI" id="CHEBI:16526"/>
        <dbReference type="ChEBI" id="CHEBI:30616"/>
        <dbReference type="ChEBI" id="CHEBI:43474"/>
        <dbReference type="ChEBI" id="CHEBI:149469"/>
        <dbReference type="ChEBI" id="CHEBI:149473"/>
        <dbReference type="ChEBI" id="CHEBI:456216"/>
        <dbReference type="EC" id="6.3.3.3"/>
    </reaction>
</comment>
<comment type="cofactor">
    <cofactor evidence="1">
        <name>Mg(2+)</name>
        <dbReference type="ChEBI" id="CHEBI:18420"/>
    </cofactor>
</comment>
<comment type="pathway">
    <text evidence="1">Cofactor biosynthesis; biotin biosynthesis; biotin from 7,8-diaminononanoate: step 1/2.</text>
</comment>
<comment type="subunit">
    <text evidence="1">Homodimer.</text>
</comment>
<comment type="subcellular location">
    <subcellularLocation>
        <location evidence="1">Cytoplasm</location>
    </subcellularLocation>
</comment>
<comment type="similarity">
    <text evidence="1">Belongs to the dethiobiotin synthetase family.</text>
</comment>
<proteinExistence type="inferred from homology"/>
<name>BIOD_PSEA8</name>
<evidence type="ECO:0000255" key="1">
    <source>
        <dbReference type="HAMAP-Rule" id="MF_00336"/>
    </source>
</evidence>
<organism>
    <name type="scientific">Pseudomonas aeruginosa (strain LESB58)</name>
    <dbReference type="NCBI Taxonomy" id="557722"/>
    <lineage>
        <taxon>Bacteria</taxon>
        <taxon>Pseudomonadati</taxon>
        <taxon>Pseudomonadota</taxon>
        <taxon>Gammaproteobacteria</taxon>
        <taxon>Pseudomonadales</taxon>
        <taxon>Pseudomonadaceae</taxon>
        <taxon>Pseudomonas</taxon>
    </lineage>
</organism>
<keyword id="KW-0067">ATP-binding</keyword>
<keyword id="KW-0093">Biotin biosynthesis</keyword>
<keyword id="KW-0963">Cytoplasm</keyword>
<keyword id="KW-0436">Ligase</keyword>
<keyword id="KW-0460">Magnesium</keyword>
<keyword id="KW-0479">Metal-binding</keyword>
<keyword id="KW-0547">Nucleotide-binding</keyword>
<accession>B7V489</accession>